<proteinExistence type="inferred from homology"/>
<protein>
    <recommendedName>
        <fullName evidence="1">4-deoxy-L-threo-5-hexosulose-uronate ketol-isomerase</fullName>
        <ecNumber evidence="1">5.3.1.17</ecNumber>
    </recommendedName>
    <alternativeName>
        <fullName evidence="1">5-keto-4-deoxyuronate isomerase</fullName>
    </alternativeName>
    <alternativeName>
        <fullName evidence="1">DKI isomerase</fullName>
    </alternativeName>
</protein>
<accession>B7NVY9</accession>
<gene>
    <name evidence="1" type="primary">kduI</name>
    <name type="ordered locus">ECIAI39_3263</name>
</gene>
<sequence length="278" mass="31076">MDVRQSIHSAHAKTLDTQGLRNEFLVEKVFVADEYTMVYSHIDRIIVGGIMPVTKTVSVGGEVGKQLGVSYFLERRELGVINIGGAGTITVDGQCYEIGHRDALYVGKGAKEVVFASIDTATPAKFYYNCAPAHTTYPTKKVTPDEVSPVTLGDNLTSNRRTINKYFVPDVLETCQLSMGLTELAPGNLWNTMPCHTHERRMEVYFYFNMDDDACVFHMMGQPQETRHIVMHNEQAVISPSWSIHSGVGTKAYTFIWGMVGENQVFDDMDHVAVKDLR</sequence>
<feature type="chain" id="PRO_1000131880" description="4-deoxy-L-threo-5-hexosulose-uronate ketol-isomerase">
    <location>
        <begin position="1"/>
        <end position="278"/>
    </location>
</feature>
<feature type="binding site" evidence="1">
    <location>
        <position position="196"/>
    </location>
    <ligand>
        <name>Zn(2+)</name>
        <dbReference type="ChEBI" id="CHEBI:29105"/>
    </ligand>
</feature>
<feature type="binding site" evidence="1">
    <location>
        <position position="198"/>
    </location>
    <ligand>
        <name>Zn(2+)</name>
        <dbReference type="ChEBI" id="CHEBI:29105"/>
    </ligand>
</feature>
<feature type="binding site" evidence="1">
    <location>
        <position position="203"/>
    </location>
    <ligand>
        <name>Zn(2+)</name>
        <dbReference type="ChEBI" id="CHEBI:29105"/>
    </ligand>
</feature>
<feature type="binding site" evidence="1">
    <location>
        <position position="245"/>
    </location>
    <ligand>
        <name>Zn(2+)</name>
        <dbReference type="ChEBI" id="CHEBI:29105"/>
    </ligand>
</feature>
<organism>
    <name type="scientific">Escherichia coli O7:K1 (strain IAI39 / ExPEC)</name>
    <dbReference type="NCBI Taxonomy" id="585057"/>
    <lineage>
        <taxon>Bacteria</taxon>
        <taxon>Pseudomonadati</taxon>
        <taxon>Pseudomonadota</taxon>
        <taxon>Gammaproteobacteria</taxon>
        <taxon>Enterobacterales</taxon>
        <taxon>Enterobacteriaceae</taxon>
        <taxon>Escherichia</taxon>
    </lineage>
</organism>
<keyword id="KW-0413">Isomerase</keyword>
<keyword id="KW-0479">Metal-binding</keyword>
<keyword id="KW-0862">Zinc</keyword>
<reference key="1">
    <citation type="journal article" date="2009" name="PLoS Genet.">
        <title>Organised genome dynamics in the Escherichia coli species results in highly diverse adaptive paths.</title>
        <authorList>
            <person name="Touchon M."/>
            <person name="Hoede C."/>
            <person name="Tenaillon O."/>
            <person name="Barbe V."/>
            <person name="Baeriswyl S."/>
            <person name="Bidet P."/>
            <person name="Bingen E."/>
            <person name="Bonacorsi S."/>
            <person name="Bouchier C."/>
            <person name="Bouvet O."/>
            <person name="Calteau A."/>
            <person name="Chiapello H."/>
            <person name="Clermont O."/>
            <person name="Cruveiller S."/>
            <person name="Danchin A."/>
            <person name="Diard M."/>
            <person name="Dossat C."/>
            <person name="Karoui M.E."/>
            <person name="Frapy E."/>
            <person name="Garry L."/>
            <person name="Ghigo J.M."/>
            <person name="Gilles A.M."/>
            <person name="Johnson J."/>
            <person name="Le Bouguenec C."/>
            <person name="Lescat M."/>
            <person name="Mangenot S."/>
            <person name="Martinez-Jehanne V."/>
            <person name="Matic I."/>
            <person name="Nassif X."/>
            <person name="Oztas S."/>
            <person name="Petit M.A."/>
            <person name="Pichon C."/>
            <person name="Rouy Z."/>
            <person name="Ruf C.S."/>
            <person name="Schneider D."/>
            <person name="Tourret J."/>
            <person name="Vacherie B."/>
            <person name="Vallenet D."/>
            <person name="Medigue C."/>
            <person name="Rocha E.P.C."/>
            <person name="Denamur E."/>
        </authorList>
    </citation>
    <scope>NUCLEOTIDE SEQUENCE [LARGE SCALE GENOMIC DNA]</scope>
    <source>
        <strain>IAI39 / ExPEC</strain>
    </source>
</reference>
<evidence type="ECO:0000255" key="1">
    <source>
        <dbReference type="HAMAP-Rule" id="MF_00687"/>
    </source>
</evidence>
<dbReference type="EC" id="5.3.1.17" evidence="1"/>
<dbReference type="EMBL" id="CU928164">
    <property type="protein sequence ID" value="CAR19382.1"/>
    <property type="molecule type" value="Genomic_DNA"/>
</dbReference>
<dbReference type="RefSeq" id="WP_000383248.1">
    <property type="nucleotide sequence ID" value="NC_011750.1"/>
</dbReference>
<dbReference type="RefSeq" id="YP_002409187.1">
    <property type="nucleotide sequence ID" value="NC_011750.1"/>
</dbReference>
<dbReference type="SMR" id="B7NVY9"/>
<dbReference type="STRING" id="585057.ECIAI39_3263"/>
<dbReference type="GeneID" id="75172927"/>
<dbReference type="KEGG" id="ect:ECIAI39_3263"/>
<dbReference type="PATRIC" id="fig|585057.6.peg.3389"/>
<dbReference type="HOGENOM" id="CLU_062609_0_0_6"/>
<dbReference type="UniPathway" id="UPA00545">
    <property type="reaction ID" value="UER00826"/>
</dbReference>
<dbReference type="Proteomes" id="UP000000749">
    <property type="component" value="Chromosome"/>
</dbReference>
<dbReference type="GO" id="GO:0008697">
    <property type="term" value="F:4-deoxy-L-threo-5-hexosulose-uronate ketol-isomerase activity"/>
    <property type="evidence" value="ECO:0007669"/>
    <property type="project" value="UniProtKB-UniRule"/>
</dbReference>
<dbReference type="GO" id="GO:0008270">
    <property type="term" value="F:zinc ion binding"/>
    <property type="evidence" value="ECO:0007669"/>
    <property type="project" value="UniProtKB-UniRule"/>
</dbReference>
<dbReference type="GO" id="GO:0019698">
    <property type="term" value="P:D-galacturonate catabolic process"/>
    <property type="evidence" value="ECO:0007669"/>
    <property type="project" value="TreeGrafter"/>
</dbReference>
<dbReference type="GO" id="GO:0042840">
    <property type="term" value="P:D-glucuronate catabolic process"/>
    <property type="evidence" value="ECO:0007669"/>
    <property type="project" value="TreeGrafter"/>
</dbReference>
<dbReference type="GO" id="GO:0045490">
    <property type="term" value="P:pectin catabolic process"/>
    <property type="evidence" value="ECO:0007669"/>
    <property type="project" value="UniProtKB-UniRule"/>
</dbReference>
<dbReference type="CDD" id="cd20491">
    <property type="entry name" value="cupin_KduI_C"/>
    <property type="match status" value="1"/>
</dbReference>
<dbReference type="CDD" id="cd20294">
    <property type="entry name" value="cupin_KduI_N"/>
    <property type="match status" value="1"/>
</dbReference>
<dbReference type="FunFam" id="2.60.120.10:FF:000018">
    <property type="entry name" value="4-deoxy-L-threo-5-hexosulose-uronate ketol-isomerase"/>
    <property type="match status" value="1"/>
</dbReference>
<dbReference type="FunFam" id="2.60.120.520:FF:000001">
    <property type="entry name" value="4-deoxy-L-threo-5-hexosulose-uronate ketol-isomerase"/>
    <property type="match status" value="1"/>
</dbReference>
<dbReference type="Gene3D" id="2.60.120.10">
    <property type="entry name" value="Jelly Rolls"/>
    <property type="match status" value="1"/>
</dbReference>
<dbReference type="Gene3D" id="2.60.120.520">
    <property type="entry name" value="pectin degrading enzyme 5-keto 4- deoxyuronate isomerase, domain 1"/>
    <property type="match status" value="1"/>
</dbReference>
<dbReference type="HAMAP" id="MF_00687">
    <property type="entry name" value="KduI"/>
    <property type="match status" value="1"/>
</dbReference>
<dbReference type="InterPro" id="IPR007045">
    <property type="entry name" value="KduI"/>
</dbReference>
<dbReference type="InterPro" id="IPR021120">
    <property type="entry name" value="KduI/IolB_isomerase"/>
</dbReference>
<dbReference type="InterPro" id="IPR027449">
    <property type="entry name" value="KduI_N"/>
</dbReference>
<dbReference type="InterPro" id="IPR014710">
    <property type="entry name" value="RmlC-like_jellyroll"/>
</dbReference>
<dbReference type="InterPro" id="IPR011051">
    <property type="entry name" value="RmlC_Cupin_sf"/>
</dbReference>
<dbReference type="NCBIfam" id="NF002091">
    <property type="entry name" value="PRK00924.1"/>
    <property type="match status" value="1"/>
</dbReference>
<dbReference type="PANTHER" id="PTHR38461">
    <property type="entry name" value="4-DEOXY-L-THREO-5-HEXOSULOSE-URONATE KETOL-ISOMERASE"/>
    <property type="match status" value="1"/>
</dbReference>
<dbReference type="PANTHER" id="PTHR38461:SF1">
    <property type="entry name" value="4-DEOXY-L-THREO-5-HEXOSULOSE-URONATE KETOL-ISOMERASE"/>
    <property type="match status" value="1"/>
</dbReference>
<dbReference type="Pfam" id="PF04962">
    <property type="entry name" value="KduI"/>
    <property type="match status" value="1"/>
</dbReference>
<dbReference type="PIRSF" id="PIRSF006625">
    <property type="entry name" value="KduI"/>
    <property type="match status" value="1"/>
</dbReference>
<dbReference type="SUPFAM" id="SSF51182">
    <property type="entry name" value="RmlC-like cupins"/>
    <property type="match status" value="1"/>
</dbReference>
<comment type="function">
    <text evidence="1">Catalyzes the isomerization of 5-dehydro-4-deoxy-D-glucuronate to 3-deoxy-D-glycero-2,5-hexodiulosonate.</text>
</comment>
<comment type="catalytic activity">
    <reaction evidence="1">
        <text>5-dehydro-4-deoxy-D-glucuronate = 3-deoxy-D-glycero-2,5-hexodiulosonate</text>
        <dbReference type="Rhea" id="RHEA:23896"/>
        <dbReference type="ChEBI" id="CHEBI:17117"/>
        <dbReference type="ChEBI" id="CHEBI:29071"/>
        <dbReference type="EC" id="5.3.1.17"/>
    </reaction>
</comment>
<comment type="cofactor">
    <cofactor evidence="1">
        <name>Zn(2+)</name>
        <dbReference type="ChEBI" id="CHEBI:29105"/>
    </cofactor>
    <text evidence="1">Binds 1 zinc ion per subunit.</text>
</comment>
<comment type="pathway">
    <text evidence="1">Glycan metabolism; pectin degradation; 2-dehydro-3-deoxy-D-gluconate from pectin: step 4/5.</text>
</comment>
<comment type="subunit">
    <text evidence="1">Homohexamer.</text>
</comment>
<comment type="similarity">
    <text evidence="1">Belongs to the KduI family.</text>
</comment>
<name>KDUI_ECO7I</name>